<protein>
    <recommendedName>
        <fullName evidence="5">Type IV narrow pilus major component PilA5</fullName>
    </recommendedName>
    <alternativeName>
        <fullName>Type IV major pilin PilA5</fullName>
    </alternativeName>
</protein>
<gene>
    <name type="primary">pilA5</name>
    <name type="ordered locus">TT_C1836</name>
</gene>
<accession>Q72GL2</accession>
<comment type="function">
    <text evidence="4">Plays an essential role in forming the main structure of the narrow T4P pili that participates in twitching motility.</text>
</comment>
<comment type="subcellular location">
    <subcellularLocation>
        <location evidence="1">Cell inner membrane</location>
        <topology evidence="2">Single-pass membrane protein</topology>
    </subcellularLocation>
    <subcellularLocation>
        <location evidence="1">Cell outer membrane</location>
        <topology evidence="2">Single-pass membrane protein</topology>
    </subcellularLocation>
    <subcellularLocation>
        <location evidence="1">Periplasm</location>
    </subcellularLocation>
    <text evidence="1">The single N-terminal transmembrane is initially involved in the correct localization to the inner membrane. Once the leader sequence cleaved, this region plays a role in multimerization and protein-protein interactions in the periplasm and the outer membrane.</text>
</comment>
<comment type="PTM">
    <text evidence="4">Glycosylated.</text>
</comment>
<comment type="disruption phenotype">
    <text evidence="4">Deletion mutants show a defect in twitching motility while DNA uptake seems not affected.</text>
</comment>
<dbReference type="EMBL" id="AE017221">
    <property type="protein sequence ID" value="AAS82178.1"/>
    <property type="molecule type" value="Genomic_DNA"/>
</dbReference>
<dbReference type="RefSeq" id="WP_011174191.1">
    <property type="nucleotide sequence ID" value="NC_005835.1"/>
</dbReference>
<dbReference type="PDB" id="6XXE">
    <property type="method" value="EM"/>
    <property type="resolution" value="3.49 A"/>
    <property type="chains" value="A/B/C/D/E/F/G/H/I/J/K/L/M/N/O/P=6-116"/>
</dbReference>
<dbReference type="PDB" id="8QQJ">
    <property type="method" value="EM"/>
    <property type="resolution" value="2.63 A"/>
    <property type="chains" value="A/B/C/D/E/F/G/H/I/J/K/L/M/N/O/P/Q/R/S/T/U/V/W/X/Y/Z/a/b/c/d=6-116"/>
</dbReference>
<dbReference type="PDBsum" id="6XXE"/>
<dbReference type="PDBsum" id="8QQJ"/>
<dbReference type="EMDB" id="EMD-10648"/>
<dbReference type="EMDB" id="EMD-18593"/>
<dbReference type="SMR" id="Q72GL2"/>
<dbReference type="KEGG" id="tth:TT_C1836"/>
<dbReference type="eggNOG" id="COG2165">
    <property type="taxonomic scope" value="Bacteria"/>
</dbReference>
<dbReference type="HOGENOM" id="CLU_091705_7_3_0"/>
<dbReference type="Proteomes" id="UP000000592">
    <property type="component" value="Chromosome"/>
</dbReference>
<dbReference type="GO" id="GO:0009279">
    <property type="term" value="C:cell outer membrane"/>
    <property type="evidence" value="ECO:0007669"/>
    <property type="project" value="UniProtKB-SubCell"/>
</dbReference>
<dbReference type="GO" id="GO:0042597">
    <property type="term" value="C:periplasmic space"/>
    <property type="evidence" value="ECO:0007669"/>
    <property type="project" value="UniProtKB-SubCell"/>
</dbReference>
<dbReference type="GO" id="GO:0005886">
    <property type="term" value="C:plasma membrane"/>
    <property type="evidence" value="ECO:0007669"/>
    <property type="project" value="UniProtKB-SubCell"/>
</dbReference>
<dbReference type="Gene3D" id="3.30.700.10">
    <property type="entry name" value="Glycoprotein, Type 4 Pilin"/>
    <property type="match status" value="1"/>
</dbReference>
<dbReference type="InterPro" id="IPR012902">
    <property type="entry name" value="N_methyl_site"/>
</dbReference>
<dbReference type="InterPro" id="IPR045584">
    <property type="entry name" value="Pilin-like"/>
</dbReference>
<dbReference type="InterPro" id="IPR050470">
    <property type="entry name" value="T4P/T2SS_Core"/>
</dbReference>
<dbReference type="NCBIfam" id="TIGR02532">
    <property type="entry name" value="IV_pilin_GFxxxE"/>
    <property type="match status" value="1"/>
</dbReference>
<dbReference type="PANTHER" id="PTHR30093">
    <property type="entry name" value="GENERAL SECRETION PATHWAY PROTEIN G"/>
    <property type="match status" value="1"/>
</dbReference>
<dbReference type="PANTHER" id="PTHR30093:SF44">
    <property type="entry name" value="TYPE II SECRETION SYSTEM CORE PROTEIN G"/>
    <property type="match status" value="1"/>
</dbReference>
<dbReference type="Pfam" id="PF07963">
    <property type="entry name" value="N_methyl"/>
    <property type="match status" value="1"/>
</dbReference>
<dbReference type="SUPFAM" id="SSF54523">
    <property type="entry name" value="Pili subunits"/>
    <property type="match status" value="1"/>
</dbReference>
<dbReference type="PROSITE" id="PS00409">
    <property type="entry name" value="PROKAR_NTER_METHYL"/>
    <property type="match status" value="1"/>
</dbReference>
<keyword id="KW-0002">3D-structure</keyword>
<keyword id="KW-0997">Cell inner membrane</keyword>
<keyword id="KW-1003">Cell membrane</keyword>
<keyword id="KW-0998">Cell outer membrane</keyword>
<keyword id="KW-0472">Membrane</keyword>
<keyword id="KW-0488">Methylation</keyword>
<keyword id="KW-0574">Periplasm</keyword>
<keyword id="KW-0812">Transmembrane</keyword>
<keyword id="KW-1133">Transmembrane helix</keyword>
<reference key="1">
    <citation type="journal article" date="2004" name="Nat. Biotechnol.">
        <title>The genome sequence of the extreme thermophile Thermus thermophilus.</title>
        <authorList>
            <person name="Henne A."/>
            <person name="Brueggemann H."/>
            <person name="Raasch C."/>
            <person name="Wiezer A."/>
            <person name="Hartsch T."/>
            <person name="Liesegang H."/>
            <person name="Johann A."/>
            <person name="Lienard T."/>
            <person name="Gohl O."/>
            <person name="Martinez-Arias R."/>
            <person name="Jacobi C."/>
            <person name="Starkuviene V."/>
            <person name="Schlenczeck S."/>
            <person name="Dencker S."/>
            <person name="Huber R."/>
            <person name="Klenk H.-P."/>
            <person name="Kramer W."/>
            <person name="Merkl R."/>
            <person name="Gottschalk G."/>
            <person name="Fritz H.-J."/>
        </authorList>
    </citation>
    <scope>NUCLEOTIDE SEQUENCE [LARGE SCALE GENOMIC DNA]</scope>
    <source>
        <strain>ATCC BAA-163 / DSM 7039 / HB27</strain>
    </source>
</reference>
<reference evidence="7" key="2">
    <citation type="journal article" date="2020" name="Nat. Commun.">
        <title>Cryo-electron microscopy reveals two distinct type IV pili assembled by the same bacterium.</title>
        <authorList>
            <person name="Neuhaus A."/>
            <person name="Selvaraj M."/>
            <person name="Salzer R."/>
            <person name="Langer J.D."/>
            <person name="Kruse K."/>
            <person name="Kirchner L."/>
            <person name="Sanders K."/>
            <person name="Daum B."/>
            <person name="Averhoff B."/>
            <person name="Gold V.A.M."/>
        </authorList>
    </citation>
    <scope>STRUCTURE BY ELECTRON MICROSCOPY (3.49 ANGSTROMS) FUNCTION</scope>
    <scope>DISRUPTION PHENOTYPE</scope>
    <scope>GLYCOSYLATION</scope>
</reference>
<evidence type="ECO:0000250" key="1">
    <source>
        <dbReference type="UniProtKB" id="Q72JC0"/>
    </source>
</evidence>
<evidence type="ECO:0000255" key="2"/>
<evidence type="ECO:0000255" key="3">
    <source>
        <dbReference type="PROSITE-ProRule" id="PRU01070"/>
    </source>
</evidence>
<evidence type="ECO:0000269" key="4">
    <source>
    </source>
</evidence>
<evidence type="ECO:0000303" key="5">
    <source>
    </source>
</evidence>
<evidence type="ECO:0000305" key="6"/>
<evidence type="ECO:0007744" key="7">
    <source>
        <dbReference type="PDB" id="6XXE"/>
    </source>
</evidence>
<evidence type="ECO:0007829" key="8">
    <source>
        <dbReference type="PDB" id="8QQJ"/>
    </source>
</evidence>
<feature type="propeptide" id="PRO_0000450708" description="Leader sequence" evidence="3 6">
    <location>
        <begin position="1"/>
        <end position="5"/>
    </location>
</feature>
<feature type="chain" id="PRO_0000450709" description="Type IV narrow pilus major component PilA5" evidence="3">
    <location>
        <begin position="6"/>
        <end position="116"/>
    </location>
</feature>
<feature type="transmembrane region" description="Helical" evidence="2">
    <location>
        <begin position="6"/>
        <end position="26"/>
    </location>
</feature>
<feature type="modified residue" description="N-methylphenylalanine" evidence="3">
    <location>
        <position position="6"/>
    </location>
</feature>
<feature type="helix" evidence="8">
    <location>
        <begin position="8"/>
        <end position="21"/>
    </location>
</feature>
<feature type="helix" evidence="8">
    <location>
        <begin position="33"/>
        <end position="58"/>
    </location>
</feature>
<feature type="helix" evidence="8">
    <location>
        <begin position="65"/>
        <end position="70"/>
    </location>
</feature>
<feature type="strand" evidence="8">
    <location>
        <begin position="74"/>
        <end position="78"/>
    </location>
</feature>
<feature type="strand" evidence="8">
    <location>
        <begin position="81"/>
        <end position="86"/>
    </location>
</feature>
<feature type="strand" evidence="8">
    <location>
        <begin position="90"/>
        <end position="94"/>
    </location>
</feature>
<feature type="turn" evidence="8">
    <location>
        <begin position="95"/>
        <end position="98"/>
    </location>
</feature>
<feature type="strand" evidence="8">
    <location>
        <begin position="99"/>
        <end position="104"/>
    </location>
</feature>
<feature type="strand" evidence="8">
    <location>
        <begin position="107"/>
        <end position="111"/>
    </location>
</feature>
<proteinExistence type="evidence at protein level"/>
<name>PILA5_THET2</name>
<organism>
    <name type="scientific">Thermus thermophilus (strain ATCC BAA-163 / DSM 7039 / HB27)</name>
    <dbReference type="NCBI Taxonomy" id="262724"/>
    <lineage>
        <taxon>Bacteria</taxon>
        <taxon>Thermotogati</taxon>
        <taxon>Deinococcota</taxon>
        <taxon>Deinococci</taxon>
        <taxon>Thermales</taxon>
        <taxon>Thermaceae</taxon>
        <taxon>Thermus</taxon>
    </lineage>
</organism>
<sequence length="116" mass="11964">MRAKGFTLIELAIVIVIIGILVAIAVPRFVDLTDQANQANVDATAAAVRSAYAIATVQAKGIPTCDQVFANPEGGSTSGSTWTSSDNSTTVSCNASADTFTISRGGKTRTLNLTVN</sequence>